<evidence type="ECO:0000250" key="1">
    <source>
        <dbReference type="UniProtKB" id="A1C8C3"/>
    </source>
</evidence>
<evidence type="ECO:0000250" key="2">
    <source>
        <dbReference type="UniProtKB" id="P04798"/>
    </source>
</evidence>
<evidence type="ECO:0000255" key="3"/>
<evidence type="ECO:0000255" key="4">
    <source>
        <dbReference type="PROSITE-ProRule" id="PRU00498"/>
    </source>
</evidence>
<evidence type="ECO:0000269" key="5">
    <source>
    </source>
</evidence>
<evidence type="ECO:0000303" key="6">
    <source>
    </source>
</evidence>
<evidence type="ECO:0000305" key="7"/>
<evidence type="ECO:0000305" key="8">
    <source>
    </source>
</evidence>
<organism>
    <name type="scientific">Emericella variicolor</name>
    <name type="common">Aspergillus stellatus</name>
    <dbReference type="NCBI Taxonomy" id="1549217"/>
    <lineage>
        <taxon>Eukaryota</taxon>
        <taxon>Fungi</taxon>
        <taxon>Dikarya</taxon>
        <taxon>Ascomycota</taxon>
        <taxon>Pezizomycotina</taxon>
        <taxon>Eurotiomycetes</taxon>
        <taxon>Eurotiomycetidae</taxon>
        <taxon>Eurotiales</taxon>
        <taxon>Aspergillaceae</taxon>
        <taxon>Aspergillus</taxon>
        <taxon>Aspergillus subgen. Nidulantes</taxon>
    </lineage>
</organism>
<proteinExistence type="evidence at protein level"/>
<reference key="1">
    <citation type="journal article" date="2016" name="Org. Lett.">
        <title>Multiple oxidative modifications in the ophiobolin biosynthesis: P450 oxidations found in genome mining.</title>
        <authorList>
            <person name="Narita K."/>
            <person name="Chiba R."/>
            <person name="Minami A."/>
            <person name="Kodama M."/>
            <person name="Fujii I."/>
            <person name="Gomi K."/>
            <person name="Oikawa H."/>
        </authorList>
    </citation>
    <scope>NUCLEOTIDE SEQUENCE [GENOMIC DNA]</scope>
    <scope>CATALYTIC ACTIVITY</scope>
    <scope>FUNCTION</scope>
    <source>
        <strain>GF10</strain>
    </source>
</reference>
<keyword id="KW-0325">Glycoprotein</keyword>
<keyword id="KW-0349">Heme</keyword>
<keyword id="KW-0408">Iron</keyword>
<keyword id="KW-0472">Membrane</keyword>
<keyword id="KW-0479">Metal-binding</keyword>
<keyword id="KW-0503">Monooxygenase</keyword>
<keyword id="KW-0560">Oxidoreductase</keyword>
<keyword id="KW-0812">Transmembrane</keyword>
<keyword id="KW-1133">Transmembrane helix</keyword>
<gene>
    <name evidence="6" type="primary">oblB</name>
</gene>
<sequence>MEAYFPQTTRDALAGLLPSQMSGRFPEMPAYLTQDVLLRAAGAVGAIYAIYISGLVIYRLFLSPLAKFPGPKIAAMTSYYELYYDVIHKGKYIFQIEKMHDKYGPIVRINPFELSIRDSEYYDELYVMGNIRKTDRYEAFVEGVVDFEGSHLATISHDLHRKRRKPLDPYFSRQGITRLEPMVAELTEKLVVNRLESYKGTGKVVRLDHAFTAFSGDVINRICVNRPSEVYVEDEDFAPWWFDMFHLGAVSLPLFMGMPWLIRLIRFMPASLASYLNTSMGSFSKFKLMCDEQLNEAKREKALKSKSQNSNQPTPGRLTLFRHLVDSDLPPAELSDTRLSREAQVLIGSGTMTTAGTMGFLCYYIMINPKIRARLSEELGSVMAEYPAKKPSLAELERLPYLQAVIKEGLRLSYGTMHRRARVSPSQPLLFKEWVIPPGTPVGMSAYFQHRDEKTFPRPMEFLPERWLGEITPAMYRNYIPFSKGSRHCLGMNLAYCELNFILAAMFRPGAAPFELYGTDESDVRPVHDLIVPMPRLDSLGVRVVYN</sequence>
<feature type="chain" id="PRO_0000451171" description="Cytochrome P450 monooxygenase oblB">
    <location>
        <begin position="1"/>
        <end position="547"/>
    </location>
</feature>
<feature type="transmembrane region" description="Helical" evidence="3">
    <location>
        <begin position="42"/>
        <end position="62"/>
    </location>
</feature>
<feature type="transmembrane region" description="Helical" evidence="3">
    <location>
        <begin position="242"/>
        <end position="262"/>
    </location>
</feature>
<feature type="transmembrane region" description="Helical" evidence="3">
    <location>
        <begin position="345"/>
        <end position="365"/>
    </location>
</feature>
<feature type="binding site" description="axial binding residue" evidence="2">
    <location>
        <position position="489"/>
    </location>
    <ligand>
        <name>heme</name>
        <dbReference type="ChEBI" id="CHEBI:30413"/>
    </ligand>
    <ligandPart>
        <name>Fe</name>
        <dbReference type="ChEBI" id="CHEBI:18248"/>
    </ligandPart>
</feature>
<feature type="glycosylation site" description="N-linked (GlcNAc...) asparagine" evidence="4">
    <location>
        <position position="277"/>
    </location>
</feature>
<name>OBLB_EMEVA</name>
<protein>
    <recommendedName>
        <fullName evidence="6">Cytochrome P450 monooxygenase oblB</fullName>
        <ecNumber evidence="5">1.-.-.-</ecNumber>
    </recommendedName>
    <alternativeName>
        <fullName evidence="6">Ophiobolin biosynthesis cluster protein B</fullName>
    </alternativeName>
</protein>
<accession>A0A1V1FNM9</accession>
<comment type="function">
    <text evidence="1 5 8">Cytochrome P450 monooxygenase; part of the gene cluster that mediates the biosynthesis of the sesterterpenes ophiobolins, fungal phytotoxins with potential anti-cancer activities (PubMed:27116000). The first step of the pathway is performed by the sesterterpene synthase oblA that possesses both prenyl transferase and terpene cyclase activity, converting isopentenyl diphosphate and dimethylallyl diphosphate into geranylfarnesyl diphosphate (GFPP) and further converting GFPP into ophiobolin F, respectively (By similarity). Other sesterterpenoids (C(25) terpenoids) are found as minor products of oblA (By similarity). The cytochrome P450 monooxygenase oblB then catalyzes a four-step oxidative transformation of ophiobolin F to yield ophiobolin C (PubMed:27116000). The function of the cytochrome P450 monooxygenase oblE has still to be determined (Probable).</text>
</comment>
<comment type="catalytic activity">
    <reaction evidence="5">
        <text>ophiobolin F + 4 reduced [NADPH--hemoprotein reductase] + 4 O2 = ophiobolin C + 4 oxidized [NADPH--hemoprotein reductase] + 6 H2O + 4 H(+)</text>
        <dbReference type="Rhea" id="RHEA:66896"/>
        <dbReference type="Rhea" id="RHEA-COMP:11964"/>
        <dbReference type="Rhea" id="RHEA-COMP:11965"/>
        <dbReference type="ChEBI" id="CHEBI:15377"/>
        <dbReference type="ChEBI" id="CHEBI:15378"/>
        <dbReference type="ChEBI" id="CHEBI:15379"/>
        <dbReference type="ChEBI" id="CHEBI:57618"/>
        <dbReference type="ChEBI" id="CHEBI:58210"/>
        <dbReference type="ChEBI" id="CHEBI:78293"/>
        <dbReference type="ChEBI" id="CHEBI:167548"/>
    </reaction>
    <physiologicalReaction direction="left-to-right" evidence="5">
        <dbReference type="Rhea" id="RHEA:66897"/>
    </physiologicalReaction>
</comment>
<comment type="cofactor">
    <cofactor evidence="2">
        <name>heme</name>
        <dbReference type="ChEBI" id="CHEBI:30413"/>
    </cofactor>
</comment>
<comment type="pathway">
    <text evidence="8">Secondary metabolite biosynthesis; terpenoid biosynthesis.</text>
</comment>
<comment type="subcellular location">
    <subcellularLocation>
        <location evidence="3">Membrane</location>
        <topology evidence="3">Multi-pass membrane protein</topology>
    </subcellularLocation>
</comment>
<comment type="similarity">
    <text evidence="7">Belongs to the cytochrome P450 family.</text>
</comment>
<dbReference type="EC" id="1.-.-.-" evidence="5"/>
<dbReference type="EMBL" id="LC127211">
    <property type="protein sequence ID" value="BAX09283.1"/>
    <property type="molecule type" value="Genomic_DNA"/>
</dbReference>
<dbReference type="SMR" id="A0A1V1FNM9"/>
<dbReference type="GlyCosmos" id="A0A1V1FNM9">
    <property type="glycosylation" value="1 site, No reported glycans"/>
</dbReference>
<dbReference type="UniPathway" id="UPA00213"/>
<dbReference type="GO" id="GO:0016020">
    <property type="term" value="C:membrane"/>
    <property type="evidence" value="ECO:0007669"/>
    <property type="project" value="UniProtKB-SubCell"/>
</dbReference>
<dbReference type="GO" id="GO:0020037">
    <property type="term" value="F:heme binding"/>
    <property type="evidence" value="ECO:0007669"/>
    <property type="project" value="InterPro"/>
</dbReference>
<dbReference type="GO" id="GO:0005506">
    <property type="term" value="F:iron ion binding"/>
    <property type="evidence" value="ECO:0007669"/>
    <property type="project" value="InterPro"/>
</dbReference>
<dbReference type="GO" id="GO:0004497">
    <property type="term" value="F:monooxygenase activity"/>
    <property type="evidence" value="ECO:0007669"/>
    <property type="project" value="UniProtKB-KW"/>
</dbReference>
<dbReference type="GO" id="GO:0016705">
    <property type="term" value="F:oxidoreductase activity, acting on paired donors, with incorporation or reduction of molecular oxygen"/>
    <property type="evidence" value="ECO:0007669"/>
    <property type="project" value="InterPro"/>
</dbReference>
<dbReference type="GO" id="GO:0044550">
    <property type="term" value="P:secondary metabolite biosynthetic process"/>
    <property type="evidence" value="ECO:0007669"/>
    <property type="project" value="UniProtKB-ARBA"/>
</dbReference>
<dbReference type="GO" id="GO:0016114">
    <property type="term" value="P:terpenoid biosynthetic process"/>
    <property type="evidence" value="ECO:0007669"/>
    <property type="project" value="UniProtKB-UniPathway"/>
</dbReference>
<dbReference type="CDD" id="cd11062">
    <property type="entry name" value="CYP58-like"/>
    <property type="match status" value="1"/>
</dbReference>
<dbReference type="Gene3D" id="1.10.630.10">
    <property type="entry name" value="Cytochrome P450"/>
    <property type="match status" value="1"/>
</dbReference>
<dbReference type="InterPro" id="IPR001128">
    <property type="entry name" value="Cyt_P450"/>
</dbReference>
<dbReference type="InterPro" id="IPR017972">
    <property type="entry name" value="Cyt_P450_CS"/>
</dbReference>
<dbReference type="InterPro" id="IPR002403">
    <property type="entry name" value="Cyt_P450_E_grp-IV"/>
</dbReference>
<dbReference type="InterPro" id="IPR036396">
    <property type="entry name" value="Cyt_P450_sf"/>
</dbReference>
<dbReference type="InterPro" id="IPR050121">
    <property type="entry name" value="Cytochrome_P450_monoxygenase"/>
</dbReference>
<dbReference type="PANTHER" id="PTHR24305">
    <property type="entry name" value="CYTOCHROME P450"/>
    <property type="match status" value="1"/>
</dbReference>
<dbReference type="PANTHER" id="PTHR24305:SF157">
    <property type="entry name" value="N-ACETYLTRYPTOPHAN 6-HYDROXYLASE IVOC-RELATED"/>
    <property type="match status" value="1"/>
</dbReference>
<dbReference type="Pfam" id="PF00067">
    <property type="entry name" value="p450"/>
    <property type="match status" value="1"/>
</dbReference>
<dbReference type="PRINTS" id="PR00465">
    <property type="entry name" value="EP450IV"/>
</dbReference>
<dbReference type="PRINTS" id="PR00385">
    <property type="entry name" value="P450"/>
</dbReference>
<dbReference type="SUPFAM" id="SSF48264">
    <property type="entry name" value="Cytochrome P450"/>
    <property type="match status" value="1"/>
</dbReference>
<dbReference type="PROSITE" id="PS00086">
    <property type="entry name" value="CYTOCHROME_P450"/>
    <property type="match status" value="1"/>
</dbReference>